<feature type="chain" id="PRO_1000189703" description="Fluoride-specific ion channel FluC">
    <location>
        <begin position="1"/>
        <end position="126"/>
    </location>
</feature>
<feature type="transmembrane region" description="Helical" evidence="1">
    <location>
        <begin position="4"/>
        <end position="24"/>
    </location>
</feature>
<feature type="transmembrane region" description="Helical" evidence="1">
    <location>
        <begin position="33"/>
        <end position="53"/>
    </location>
</feature>
<feature type="transmembrane region" description="Helical" evidence="1">
    <location>
        <begin position="67"/>
        <end position="87"/>
    </location>
</feature>
<feature type="transmembrane region" description="Helical" evidence="1">
    <location>
        <begin position="97"/>
        <end position="117"/>
    </location>
</feature>
<feature type="binding site" evidence="1">
    <location>
        <position position="74"/>
    </location>
    <ligand>
        <name>Na(+)</name>
        <dbReference type="ChEBI" id="CHEBI:29101"/>
        <note>structural</note>
    </ligand>
</feature>
<feature type="binding site" evidence="1">
    <location>
        <position position="77"/>
    </location>
    <ligand>
        <name>Na(+)</name>
        <dbReference type="ChEBI" id="CHEBI:29101"/>
        <note>structural</note>
    </ligand>
</feature>
<organism>
    <name type="scientific">Acinetobacter baumannii (strain ATCC 17978 / DSM 105126 / CIP 53.77 / LMG 1025 / NCDC KC755 / 5377)</name>
    <dbReference type="NCBI Taxonomy" id="400667"/>
    <lineage>
        <taxon>Bacteria</taxon>
        <taxon>Pseudomonadati</taxon>
        <taxon>Pseudomonadota</taxon>
        <taxon>Gammaproteobacteria</taxon>
        <taxon>Moraxellales</taxon>
        <taxon>Moraxellaceae</taxon>
        <taxon>Acinetobacter</taxon>
        <taxon>Acinetobacter calcoaceticus/baumannii complex</taxon>
    </lineage>
</organism>
<name>FLUC_ACIBT</name>
<gene>
    <name evidence="1" type="primary">fluC</name>
    <name evidence="1" type="synonym">crcB</name>
    <name type="ordered locus">A1S_0389</name>
</gene>
<dbReference type="EMBL" id="CP000521">
    <property type="protein sequence ID" value="ABO10848.2"/>
    <property type="molecule type" value="Genomic_DNA"/>
</dbReference>
<dbReference type="RefSeq" id="WP_000291732.1">
    <property type="nucleotide sequence ID" value="NZ_CACVBA010000001.1"/>
</dbReference>
<dbReference type="SMR" id="A3M1Q4"/>
<dbReference type="KEGG" id="acb:A1S_0389"/>
<dbReference type="HOGENOM" id="CLU_114342_3_3_6"/>
<dbReference type="GO" id="GO:0005886">
    <property type="term" value="C:plasma membrane"/>
    <property type="evidence" value="ECO:0007669"/>
    <property type="project" value="UniProtKB-SubCell"/>
</dbReference>
<dbReference type="GO" id="GO:0062054">
    <property type="term" value="F:fluoride channel activity"/>
    <property type="evidence" value="ECO:0007669"/>
    <property type="project" value="UniProtKB-UniRule"/>
</dbReference>
<dbReference type="GO" id="GO:0046872">
    <property type="term" value="F:metal ion binding"/>
    <property type="evidence" value="ECO:0007669"/>
    <property type="project" value="UniProtKB-KW"/>
</dbReference>
<dbReference type="GO" id="GO:0140114">
    <property type="term" value="P:cellular detoxification of fluoride"/>
    <property type="evidence" value="ECO:0007669"/>
    <property type="project" value="UniProtKB-UniRule"/>
</dbReference>
<dbReference type="HAMAP" id="MF_00454">
    <property type="entry name" value="FluC"/>
    <property type="match status" value="1"/>
</dbReference>
<dbReference type="InterPro" id="IPR003691">
    <property type="entry name" value="FluC"/>
</dbReference>
<dbReference type="NCBIfam" id="TIGR00494">
    <property type="entry name" value="crcB"/>
    <property type="match status" value="1"/>
</dbReference>
<dbReference type="NCBIfam" id="NF010792">
    <property type="entry name" value="PRK14196.1"/>
    <property type="match status" value="1"/>
</dbReference>
<dbReference type="PANTHER" id="PTHR28259">
    <property type="entry name" value="FLUORIDE EXPORT PROTEIN 1-RELATED"/>
    <property type="match status" value="1"/>
</dbReference>
<dbReference type="PANTHER" id="PTHR28259:SF1">
    <property type="entry name" value="FLUORIDE EXPORT PROTEIN 1-RELATED"/>
    <property type="match status" value="1"/>
</dbReference>
<dbReference type="Pfam" id="PF02537">
    <property type="entry name" value="CRCB"/>
    <property type="match status" value="1"/>
</dbReference>
<accession>A3M1Q4</accession>
<evidence type="ECO:0000255" key="1">
    <source>
        <dbReference type="HAMAP-Rule" id="MF_00454"/>
    </source>
</evidence>
<reference key="1">
    <citation type="journal article" date="2007" name="Genes Dev.">
        <title>New insights into Acinetobacter baumannii pathogenesis revealed by high-density pyrosequencing and transposon mutagenesis.</title>
        <authorList>
            <person name="Smith M.G."/>
            <person name="Gianoulis T.A."/>
            <person name="Pukatzki S."/>
            <person name="Mekalanos J.J."/>
            <person name="Ornston L.N."/>
            <person name="Gerstein M."/>
            <person name="Snyder M."/>
        </authorList>
    </citation>
    <scope>NUCLEOTIDE SEQUENCE [LARGE SCALE GENOMIC DNA]</scope>
    <source>
        <strain>ATCC 17978 / DSM 105126 / CIP 53.77 / LMG 1025 / NCDC KC755 / 5377</strain>
    </source>
</reference>
<proteinExistence type="inferred from homology"/>
<protein>
    <recommendedName>
        <fullName evidence="1">Fluoride-specific ion channel FluC</fullName>
    </recommendedName>
</protein>
<keyword id="KW-0997">Cell inner membrane</keyword>
<keyword id="KW-1003">Cell membrane</keyword>
<keyword id="KW-0407">Ion channel</keyword>
<keyword id="KW-0406">Ion transport</keyword>
<keyword id="KW-0472">Membrane</keyword>
<keyword id="KW-0479">Metal-binding</keyword>
<keyword id="KW-0915">Sodium</keyword>
<keyword id="KW-0812">Transmembrane</keyword>
<keyword id="KW-1133">Transmembrane helix</keyword>
<keyword id="KW-0813">Transport</keyword>
<sequence length="126" mass="13729">MYYPLLSIALGSVLGAWLRWFLGLKLNPIYPQIPLGTVTVNLVGGFIIGFAMAYFAHSDLSPNYKLFVITGFCGALTTFSTFSIEIVTLLQSGKWGMAMLAISIHLIGSLIFTCLGLAAYYWVAGH</sequence>
<comment type="function">
    <text evidence="1">Fluoride-specific ion channel. Important for reducing fluoride concentration in the cell, thus reducing its toxicity.</text>
</comment>
<comment type="catalytic activity">
    <reaction evidence="1">
        <text>fluoride(in) = fluoride(out)</text>
        <dbReference type="Rhea" id="RHEA:76159"/>
        <dbReference type="ChEBI" id="CHEBI:17051"/>
    </reaction>
    <physiologicalReaction direction="left-to-right" evidence="1">
        <dbReference type="Rhea" id="RHEA:76160"/>
    </physiologicalReaction>
</comment>
<comment type="activity regulation">
    <text evidence="1">Na(+) is not transported, but it plays an essential structural role and its presence is essential for fluoride channel function.</text>
</comment>
<comment type="subcellular location">
    <subcellularLocation>
        <location evidence="1">Cell inner membrane</location>
        <topology evidence="1">Multi-pass membrane protein</topology>
    </subcellularLocation>
</comment>
<comment type="similarity">
    <text evidence="1">Belongs to the fluoride channel Fluc/FEX (TC 1.A.43) family.</text>
</comment>